<protein>
    <recommendedName>
        <fullName evidence="1">PF03932 family protein CutC</fullName>
    </recommendedName>
</protein>
<keyword id="KW-0963">Cytoplasm</keyword>
<comment type="subunit">
    <text evidence="1">Homodimer.</text>
</comment>
<comment type="subcellular location">
    <subcellularLocation>
        <location evidence="1">Cytoplasm</location>
    </subcellularLocation>
</comment>
<comment type="similarity">
    <text evidence="1">Belongs to the CutC family.</text>
</comment>
<comment type="caution">
    <text evidence="1">Once thought to be involved in copper homeostasis, experiments in E.coli have shown this is not the case.</text>
</comment>
<feature type="chain" id="PRO_1000133845" description="PF03932 family protein CutC">
    <location>
        <begin position="1"/>
        <end position="248"/>
    </location>
</feature>
<proteinExistence type="inferred from homology"/>
<accession>B5R8D0</accession>
<sequence>MALLEICCYSMECALTAQRNGADRIELCAAPKEGGLTPSLGVLRSVREHITIPVHPIIRPRGGDFYYTDGEFAAMLEDIRLVRELGFPGLVTGVLTVDGDVDMSRMEKIMAAAGPLAVTFHRAFDMCANPFNALKNLADAGVARVLTSGQKADAAQGLSIIMELIAQGDAPTIMAGAGVRANNLQNFLDAGVREVHSSAGVLLPSPMRYRNQGLSMSADIQADEYSRYRVEGAAVAEMKGIIVRHQAK</sequence>
<gene>
    <name evidence="1" type="primary">cutC</name>
    <name type="ordered locus">SG1145</name>
</gene>
<dbReference type="EMBL" id="AM933173">
    <property type="protein sequence ID" value="CAR37026.1"/>
    <property type="molecule type" value="Genomic_DNA"/>
</dbReference>
<dbReference type="RefSeq" id="WP_001185780.1">
    <property type="nucleotide sequence ID" value="NC_011274.1"/>
</dbReference>
<dbReference type="SMR" id="B5R8D0"/>
<dbReference type="KEGG" id="seg:SG1145"/>
<dbReference type="HOGENOM" id="CLU_050555_3_1_6"/>
<dbReference type="Proteomes" id="UP000008321">
    <property type="component" value="Chromosome"/>
</dbReference>
<dbReference type="GO" id="GO:0005737">
    <property type="term" value="C:cytoplasm"/>
    <property type="evidence" value="ECO:0007669"/>
    <property type="project" value="UniProtKB-SubCell"/>
</dbReference>
<dbReference type="GO" id="GO:0005507">
    <property type="term" value="F:copper ion binding"/>
    <property type="evidence" value="ECO:0007669"/>
    <property type="project" value="TreeGrafter"/>
</dbReference>
<dbReference type="FunFam" id="3.20.20.380:FF:000001">
    <property type="entry name" value="Copper homeostasis protein CutC"/>
    <property type="match status" value="1"/>
</dbReference>
<dbReference type="Gene3D" id="3.20.20.380">
    <property type="entry name" value="Copper homeostasis (CutC) domain"/>
    <property type="match status" value="1"/>
</dbReference>
<dbReference type="HAMAP" id="MF_00795">
    <property type="entry name" value="CutC"/>
    <property type="match status" value="1"/>
</dbReference>
<dbReference type="InterPro" id="IPR005627">
    <property type="entry name" value="CutC-like"/>
</dbReference>
<dbReference type="InterPro" id="IPR036822">
    <property type="entry name" value="CutC-like_dom_sf"/>
</dbReference>
<dbReference type="NCBIfam" id="NF008603">
    <property type="entry name" value="PRK11572.1"/>
    <property type="match status" value="1"/>
</dbReference>
<dbReference type="PANTHER" id="PTHR12598">
    <property type="entry name" value="COPPER HOMEOSTASIS PROTEIN CUTC"/>
    <property type="match status" value="1"/>
</dbReference>
<dbReference type="PANTHER" id="PTHR12598:SF0">
    <property type="entry name" value="COPPER HOMEOSTASIS PROTEIN CUTC HOMOLOG"/>
    <property type="match status" value="1"/>
</dbReference>
<dbReference type="Pfam" id="PF03932">
    <property type="entry name" value="CutC"/>
    <property type="match status" value="1"/>
</dbReference>
<dbReference type="SUPFAM" id="SSF110395">
    <property type="entry name" value="CutC-like"/>
    <property type="match status" value="1"/>
</dbReference>
<evidence type="ECO:0000255" key="1">
    <source>
        <dbReference type="HAMAP-Rule" id="MF_00795"/>
    </source>
</evidence>
<organism>
    <name type="scientific">Salmonella gallinarum (strain 287/91 / NCTC 13346)</name>
    <dbReference type="NCBI Taxonomy" id="550538"/>
    <lineage>
        <taxon>Bacteria</taxon>
        <taxon>Pseudomonadati</taxon>
        <taxon>Pseudomonadota</taxon>
        <taxon>Gammaproteobacteria</taxon>
        <taxon>Enterobacterales</taxon>
        <taxon>Enterobacteriaceae</taxon>
        <taxon>Salmonella</taxon>
    </lineage>
</organism>
<name>CUTC_SALG2</name>
<reference key="1">
    <citation type="journal article" date="2008" name="Genome Res.">
        <title>Comparative genome analysis of Salmonella enteritidis PT4 and Salmonella gallinarum 287/91 provides insights into evolutionary and host adaptation pathways.</title>
        <authorList>
            <person name="Thomson N.R."/>
            <person name="Clayton D.J."/>
            <person name="Windhorst D."/>
            <person name="Vernikos G."/>
            <person name="Davidson S."/>
            <person name="Churcher C."/>
            <person name="Quail M.A."/>
            <person name="Stevens M."/>
            <person name="Jones M.A."/>
            <person name="Watson M."/>
            <person name="Barron A."/>
            <person name="Layton A."/>
            <person name="Pickard D."/>
            <person name="Kingsley R.A."/>
            <person name="Bignell A."/>
            <person name="Clark L."/>
            <person name="Harris B."/>
            <person name="Ormond D."/>
            <person name="Abdellah Z."/>
            <person name="Brooks K."/>
            <person name="Cherevach I."/>
            <person name="Chillingworth T."/>
            <person name="Woodward J."/>
            <person name="Norberczak H."/>
            <person name="Lord A."/>
            <person name="Arrowsmith C."/>
            <person name="Jagels K."/>
            <person name="Moule S."/>
            <person name="Mungall K."/>
            <person name="Saunders M."/>
            <person name="Whitehead S."/>
            <person name="Chabalgoity J.A."/>
            <person name="Maskell D."/>
            <person name="Humphreys T."/>
            <person name="Roberts M."/>
            <person name="Barrow P.A."/>
            <person name="Dougan G."/>
            <person name="Parkhill J."/>
        </authorList>
    </citation>
    <scope>NUCLEOTIDE SEQUENCE [LARGE SCALE GENOMIC DNA]</scope>
    <source>
        <strain>287/91 / NCTC 13346</strain>
    </source>
</reference>